<feature type="chain" id="PRO_0000370213" description="Probable prefoldin subunit 6">
    <location>
        <begin position="1"/>
        <end position="119"/>
    </location>
</feature>
<dbReference type="EMBL" id="AL844504">
    <property type="protein sequence ID" value="CAX63956.1"/>
    <property type="molecule type" value="Genomic_DNA"/>
</dbReference>
<dbReference type="RefSeq" id="XP_002808685.1">
    <property type="nucleotide sequence ID" value="XM_002808639.1"/>
</dbReference>
<dbReference type="SMR" id="Q8I3Y6"/>
<dbReference type="BioGRID" id="1208251">
    <property type="interactions" value="2"/>
</dbReference>
<dbReference type="FunCoup" id="Q8I3Y6">
    <property type="interactions" value="256"/>
</dbReference>
<dbReference type="IntAct" id="Q8I3Y6">
    <property type="interactions" value="2"/>
</dbReference>
<dbReference type="STRING" id="36329.Q8I3Y6"/>
<dbReference type="PaxDb" id="5833-PFE0595w"/>
<dbReference type="EnsemblProtists" id="CAX63956">
    <property type="protein sequence ID" value="CAX63956"/>
    <property type="gene ID" value="PF3D7_0512000"/>
</dbReference>
<dbReference type="GeneID" id="812934"/>
<dbReference type="KEGG" id="pfa:PF3D7_0512000"/>
<dbReference type="VEuPathDB" id="PlasmoDB:PF3D7_0512000"/>
<dbReference type="HOGENOM" id="CLU_125172_2_0_1"/>
<dbReference type="InParanoid" id="Q8I3Y6"/>
<dbReference type="OMA" id="KCYDTIT"/>
<dbReference type="OrthoDB" id="248120at2759"/>
<dbReference type="PhylomeDB" id="Q8I3Y6"/>
<dbReference type="Proteomes" id="UP000001450">
    <property type="component" value="Chromosome 5"/>
</dbReference>
<dbReference type="GO" id="GO:0005737">
    <property type="term" value="C:cytoplasm"/>
    <property type="evidence" value="ECO:0000318"/>
    <property type="project" value="GO_Central"/>
</dbReference>
<dbReference type="GO" id="GO:0016272">
    <property type="term" value="C:prefoldin complex"/>
    <property type="evidence" value="ECO:0000250"/>
    <property type="project" value="UniProtKB"/>
</dbReference>
<dbReference type="GO" id="GO:0051087">
    <property type="term" value="F:protein-folding chaperone binding"/>
    <property type="evidence" value="ECO:0000250"/>
    <property type="project" value="UniProtKB"/>
</dbReference>
<dbReference type="GO" id="GO:0051082">
    <property type="term" value="F:unfolded protein binding"/>
    <property type="evidence" value="ECO:0007669"/>
    <property type="project" value="InterPro"/>
</dbReference>
<dbReference type="GO" id="GO:0051131">
    <property type="term" value="P:chaperone-mediated protein complex assembly"/>
    <property type="evidence" value="ECO:0000250"/>
    <property type="project" value="UniProtKB"/>
</dbReference>
<dbReference type="GO" id="GO:0006457">
    <property type="term" value="P:protein folding"/>
    <property type="evidence" value="ECO:0000318"/>
    <property type="project" value="GO_Central"/>
</dbReference>
<dbReference type="CDD" id="cd23161">
    <property type="entry name" value="Prefoldin_6"/>
    <property type="match status" value="1"/>
</dbReference>
<dbReference type="FunFam" id="1.10.287.370:FF:000030">
    <property type="entry name" value="Probable prefoldin subunit 6"/>
    <property type="match status" value="1"/>
</dbReference>
<dbReference type="Gene3D" id="1.10.287.370">
    <property type="match status" value="1"/>
</dbReference>
<dbReference type="InterPro" id="IPR002777">
    <property type="entry name" value="PFD_beta-like"/>
</dbReference>
<dbReference type="InterPro" id="IPR009053">
    <property type="entry name" value="Prefoldin"/>
</dbReference>
<dbReference type="PANTHER" id="PTHR21431">
    <property type="entry name" value="PREFOLDIN SUBUNIT 6"/>
    <property type="match status" value="1"/>
</dbReference>
<dbReference type="PANTHER" id="PTHR21431:SF0">
    <property type="entry name" value="PREFOLDIN SUBUNIT 6"/>
    <property type="match status" value="1"/>
</dbReference>
<dbReference type="Pfam" id="PF01920">
    <property type="entry name" value="Prefoldin_2"/>
    <property type="match status" value="1"/>
</dbReference>
<dbReference type="SUPFAM" id="SSF46579">
    <property type="entry name" value="Prefoldin"/>
    <property type="match status" value="1"/>
</dbReference>
<name>PFD6_PLAF7</name>
<proteinExistence type="evidence at protein level"/>
<comment type="function">
    <text evidence="1">Binds specifically to cytosolic chaperonin (c-CPN) and transfers target proteins to it. Binds to nascent polypeptide chain and promotes folding in an environment in which there are many competing pathways for nonnative proteins.</text>
</comment>
<comment type="subunit">
    <text evidence="1 4">Heterohexamer of two PFD-alpha type and four PFD-beta type subunits (By similarity). May interact with MSP1 (PubMed:33145997).</text>
</comment>
<comment type="developmental stage">
    <text evidence="4">During the asexual blood stage, expressed at the throphozoite and schizont stages (at protein level).</text>
</comment>
<comment type="biotechnology">
    <text evidence="3">Possible candidate for an effective malaria vaccine as determined by epitope response in sera.</text>
</comment>
<comment type="similarity">
    <text evidence="2">Belongs to the prefoldin subunit beta family.</text>
</comment>
<organism>
    <name type="scientific">Plasmodium falciparum (isolate 3D7)</name>
    <dbReference type="NCBI Taxonomy" id="36329"/>
    <lineage>
        <taxon>Eukaryota</taxon>
        <taxon>Sar</taxon>
        <taxon>Alveolata</taxon>
        <taxon>Apicomplexa</taxon>
        <taxon>Aconoidasida</taxon>
        <taxon>Haemosporida</taxon>
        <taxon>Plasmodiidae</taxon>
        <taxon>Plasmodium</taxon>
        <taxon>Plasmodium (Laverania)</taxon>
    </lineage>
</organism>
<sequence>MSQEKISEIIKDISALKTSCEKLNSQLDELITQKVENEMLLEEVKVLEDDSVLHKLVGLVLVKEEKSKCYDTISRRLQYITGEIENRKKVITNSEEKLRKLFSDLEAHAGQRKIPVPQA</sequence>
<reference key="1">
    <citation type="journal article" date="2002" name="Nature">
        <title>Genome sequence of the human malaria parasite Plasmodium falciparum.</title>
        <authorList>
            <person name="Gardner M.J."/>
            <person name="Hall N."/>
            <person name="Fung E."/>
            <person name="White O."/>
            <person name="Berriman M."/>
            <person name="Hyman R.W."/>
            <person name="Carlton J.M."/>
            <person name="Pain A."/>
            <person name="Nelson K.E."/>
            <person name="Bowman S."/>
            <person name="Paulsen I.T."/>
            <person name="James K.D."/>
            <person name="Eisen J.A."/>
            <person name="Rutherford K.M."/>
            <person name="Salzberg S.L."/>
            <person name="Craig A."/>
            <person name="Kyes S."/>
            <person name="Chan M.-S."/>
            <person name="Nene V."/>
            <person name="Shallom S.J."/>
            <person name="Suh B."/>
            <person name="Peterson J."/>
            <person name="Angiuoli S."/>
            <person name="Pertea M."/>
            <person name="Allen J."/>
            <person name="Selengut J."/>
            <person name="Haft D."/>
            <person name="Mather M.W."/>
            <person name="Vaidya A.B."/>
            <person name="Martin D.M.A."/>
            <person name="Fairlamb A.H."/>
            <person name="Fraunholz M.J."/>
            <person name="Roos D.S."/>
            <person name="Ralph S.A."/>
            <person name="McFadden G.I."/>
            <person name="Cummings L.M."/>
            <person name="Subramanian G.M."/>
            <person name="Mungall C."/>
            <person name="Venter J.C."/>
            <person name="Carucci D.J."/>
            <person name="Hoffman S.L."/>
            <person name="Newbold C."/>
            <person name="Davis R.W."/>
            <person name="Fraser C.M."/>
            <person name="Barrell B.G."/>
        </authorList>
    </citation>
    <scope>NUCLEOTIDE SEQUENCE [LARGE SCALE GENOMIC DNA]</scope>
    <source>
        <strain>3D7</strain>
    </source>
</reference>
<reference key="2">
    <citation type="journal article" date="2002" name="Nature">
        <title>Sequence of Plasmodium falciparum chromosomes 1, 3-9 and 13.</title>
        <authorList>
            <person name="Hall N."/>
            <person name="Pain A."/>
            <person name="Berriman M."/>
            <person name="Churcher C.M."/>
            <person name="Harris B."/>
            <person name="Harris D."/>
            <person name="Mungall K.L."/>
            <person name="Bowman S."/>
            <person name="Atkin R."/>
            <person name="Baker S."/>
            <person name="Barron A."/>
            <person name="Brooks K."/>
            <person name="Buckee C.O."/>
            <person name="Burrows C."/>
            <person name="Cherevach I."/>
            <person name="Chillingworth C."/>
            <person name="Chillingworth T."/>
            <person name="Christodoulou Z."/>
            <person name="Clark L."/>
            <person name="Clark R."/>
            <person name="Corton C."/>
            <person name="Cronin A."/>
            <person name="Davies R.M."/>
            <person name="Davis P."/>
            <person name="Dear P."/>
            <person name="Dearden F."/>
            <person name="Doggett J."/>
            <person name="Feltwell T."/>
            <person name="Goble A."/>
            <person name="Goodhead I."/>
            <person name="Gwilliam R."/>
            <person name="Hamlin N."/>
            <person name="Hance Z."/>
            <person name="Harper D."/>
            <person name="Hauser H."/>
            <person name="Hornsby T."/>
            <person name="Holroyd S."/>
            <person name="Horrocks P."/>
            <person name="Humphray S."/>
            <person name="Jagels K."/>
            <person name="James K.D."/>
            <person name="Johnson D."/>
            <person name="Kerhornou A."/>
            <person name="Knights A."/>
            <person name="Konfortov B."/>
            <person name="Kyes S."/>
            <person name="Larke N."/>
            <person name="Lawson D."/>
            <person name="Lennard N."/>
            <person name="Line A."/>
            <person name="Maddison M."/>
            <person name="Mclean J."/>
            <person name="Mooney P."/>
            <person name="Moule S."/>
            <person name="Murphy L."/>
            <person name="Oliver K."/>
            <person name="Ormond D."/>
            <person name="Price C."/>
            <person name="Quail M.A."/>
            <person name="Rabbinowitsch E."/>
            <person name="Rajandream M.A."/>
            <person name="Rutter S."/>
            <person name="Rutherford K.M."/>
            <person name="Sanders M."/>
            <person name="Simmonds M."/>
            <person name="Seeger K."/>
            <person name="Sharp S."/>
            <person name="Smith R."/>
            <person name="Squares R."/>
            <person name="Squares S."/>
            <person name="Stevens K."/>
            <person name="Taylor K."/>
            <person name="Tivey A."/>
            <person name="Unwin L."/>
            <person name="Whitehead S."/>
            <person name="Woodward J.R."/>
            <person name="Sulston J.E."/>
            <person name="Craig A."/>
            <person name="Newbold C."/>
            <person name="Barrell B.G."/>
        </authorList>
    </citation>
    <scope>NUCLEOTIDE SEQUENCE [LARGE SCALE GENOMIC DNA]</scope>
    <source>
        <strain>3D7</strain>
    </source>
</reference>
<reference evidence="6" key="3">
    <citation type="journal article" date="2007" name="PLoS ONE">
        <title>Rapid identification of malaria vaccine candidates based on alpha-helical coiled coil protein motif.</title>
        <authorList>
            <person name="Villard V."/>
            <person name="Agak G.W."/>
            <person name="Frank G."/>
            <person name="Jafarshad A."/>
            <person name="Servis C."/>
            <person name="Nebie I."/>
            <person name="Sirima S.B."/>
            <person name="Felger I."/>
            <person name="Arevalo-Herrera M."/>
            <person name="Herrera S."/>
            <person name="Heitz F."/>
            <person name="Baecker V."/>
            <person name="Druilhe P."/>
            <person name="Kajava A.V."/>
            <person name="Corradin G."/>
        </authorList>
    </citation>
    <scope>SYNTHESIS OF 1-33</scope>
    <scope>POSSIBLE CANDIDATE MALARIA EPITOPE</scope>
</reference>
<reference key="4">
    <citation type="journal article" date="2022" name="FEBS Open Bio">
        <title>Prefoldin subunit 6 of Plasmodium falciparum binds merozoite surface protein-1.</title>
        <authorList>
            <person name="Kumar V."/>
            <person name="Shoaib R."/>
            <person name="Behl A."/>
            <person name="Munjal A."/>
            <person name="Abid M."/>
            <person name="Singh S."/>
        </authorList>
    </citation>
    <scope>INTERACTION WITH MSP1</scope>
    <scope>DEVELOPMENTAL STAGE</scope>
</reference>
<gene>
    <name evidence="5" type="primary">PFD6</name>
    <name type="ORF">PF3D7_0512000</name>
    <name type="ORF">PFE0595w</name>
</gene>
<protein>
    <recommendedName>
        <fullName evidence="5">Probable prefoldin subunit 6</fullName>
        <shortName evidence="5">PfPFD-6</shortName>
    </recommendedName>
</protein>
<keyword id="KW-0143">Chaperone</keyword>
<keyword id="KW-0477">Merozoite</keyword>
<keyword id="KW-1185">Reference proteome</keyword>
<evidence type="ECO:0000250" key="1">
    <source>
        <dbReference type="UniProtKB" id="O15212"/>
    </source>
</evidence>
<evidence type="ECO:0000255" key="2"/>
<evidence type="ECO:0000269" key="3">
    <source>
    </source>
</evidence>
<evidence type="ECO:0000269" key="4">
    <source>
    </source>
</evidence>
<evidence type="ECO:0000303" key="5">
    <source>
    </source>
</evidence>
<evidence type="ECO:0000305" key="6"/>
<accession>Q8I3Y6</accession>
<accession>C0H4D4</accession>